<sequence>MLNPTYLQQIRSQNPLIHNITNVVAANFSANGLLAIGASPLMSAAMEEMHEVPRLSQALVINIGTLMGKEVDAMVLAGKTANEVGIPVVLDPVGVGATTFRKQTVARLLKEVKFAAIRGNAGELATIAEVNWQAKGVDAGSGEADLAQIAHIVAKTYQCIAMISGATDYLSDGEHHAQIHNGTPLFPKITASGCLLSAVCGAFLAVAKPEQYFDAMLEACTAYAIAGELAAQGLKTTQHGQFYVGLLDQLAHLSPETINQYARISYE</sequence>
<name>THIM_PASMU</name>
<feature type="chain" id="PRO_0000156948" description="Hydroxyethylthiazole kinase">
    <location>
        <begin position="1"/>
        <end position="267"/>
    </location>
</feature>
<feature type="binding site" evidence="1">
    <location>
        <position position="42"/>
    </location>
    <ligand>
        <name>substrate</name>
    </ligand>
</feature>
<feature type="binding site" evidence="1">
    <location>
        <position position="118"/>
    </location>
    <ligand>
        <name>ATP</name>
        <dbReference type="ChEBI" id="CHEBI:30616"/>
    </ligand>
</feature>
<feature type="binding site" evidence="1">
    <location>
        <position position="164"/>
    </location>
    <ligand>
        <name>ATP</name>
        <dbReference type="ChEBI" id="CHEBI:30616"/>
    </ligand>
</feature>
<feature type="binding site" evidence="1">
    <location>
        <position position="191"/>
    </location>
    <ligand>
        <name>substrate</name>
    </ligand>
</feature>
<dbReference type="EC" id="2.7.1.50" evidence="1"/>
<dbReference type="EMBL" id="AE004439">
    <property type="protein sequence ID" value="AAK03346.1"/>
    <property type="molecule type" value="Genomic_DNA"/>
</dbReference>
<dbReference type="RefSeq" id="WP_005717730.1">
    <property type="nucleotide sequence ID" value="NC_002663.1"/>
</dbReference>
<dbReference type="SMR" id="P57931"/>
<dbReference type="STRING" id="272843.PM1262"/>
<dbReference type="EnsemblBacteria" id="AAK03346">
    <property type="protein sequence ID" value="AAK03346"/>
    <property type="gene ID" value="PM1262"/>
</dbReference>
<dbReference type="KEGG" id="pmu:PM1262"/>
<dbReference type="PATRIC" id="fig|272843.6.peg.1272"/>
<dbReference type="HOGENOM" id="CLU_019943_0_0_6"/>
<dbReference type="OrthoDB" id="8909021at2"/>
<dbReference type="UniPathway" id="UPA00060">
    <property type="reaction ID" value="UER00139"/>
</dbReference>
<dbReference type="Proteomes" id="UP000000809">
    <property type="component" value="Chromosome"/>
</dbReference>
<dbReference type="GO" id="GO:0005524">
    <property type="term" value="F:ATP binding"/>
    <property type="evidence" value="ECO:0007669"/>
    <property type="project" value="UniProtKB-UniRule"/>
</dbReference>
<dbReference type="GO" id="GO:0004417">
    <property type="term" value="F:hydroxyethylthiazole kinase activity"/>
    <property type="evidence" value="ECO:0007669"/>
    <property type="project" value="UniProtKB-UniRule"/>
</dbReference>
<dbReference type="GO" id="GO:0000287">
    <property type="term" value="F:magnesium ion binding"/>
    <property type="evidence" value="ECO:0007669"/>
    <property type="project" value="UniProtKB-UniRule"/>
</dbReference>
<dbReference type="GO" id="GO:0009228">
    <property type="term" value="P:thiamine biosynthetic process"/>
    <property type="evidence" value="ECO:0007669"/>
    <property type="project" value="UniProtKB-KW"/>
</dbReference>
<dbReference type="GO" id="GO:0009229">
    <property type="term" value="P:thiamine diphosphate biosynthetic process"/>
    <property type="evidence" value="ECO:0007669"/>
    <property type="project" value="UniProtKB-UniRule"/>
</dbReference>
<dbReference type="CDD" id="cd01170">
    <property type="entry name" value="THZ_kinase"/>
    <property type="match status" value="1"/>
</dbReference>
<dbReference type="Gene3D" id="3.40.1190.20">
    <property type="match status" value="1"/>
</dbReference>
<dbReference type="HAMAP" id="MF_00228">
    <property type="entry name" value="Thz_kinase"/>
    <property type="match status" value="1"/>
</dbReference>
<dbReference type="InterPro" id="IPR000417">
    <property type="entry name" value="Hyethyz_kinase"/>
</dbReference>
<dbReference type="InterPro" id="IPR029056">
    <property type="entry name" value="Ribokinase-like"/>
</dbReference>
<dbReference type="NCBIfam" id="NF006830">
    <property type="entry name" value="PRK09355.1"/>
    <property type="match status" value="1"/>
</dbReference>
<dbReference type="NCBIfam" id="TIGR00694">
    <property type="entry name" value="thiM"/>
    <property type="match status" value="1"/>
</dbReference>
<dbReference type="Pfam" id="PF02110">
    <property type="entry name" value="HK"/>
    <property type="match status" value="1"/>
</dbReference>
<dbReference type="PIRSF" id="PIRSF000513">
    <property type="entry name" value="Thz_kinase"/>
    <property type="match status" value="1"/>
</dbReference>
<dbReference type="PRINTS" id="PR01099">
    <property type="entry name" value="HYETHTZKNASE"/>
</dbReference>
<dbReference type="SUPFAM" id="SSF53613">
    <property type="entry name" value="Ribokinase-like"/>
    <property type="match status" value="1"/>
</dbReference>
<accession>P57931</accession>
<reference key="1">
    <citation type="journal article" date="2001" name="Proc. Natl. Acad. Sci. U.S.A.">
        <title>Complete genomic sequence of Pasteurella multocida Pm70.</title>
        <authorList>
            <person name="May B.J."/>
            <person name="Zhang Q."/>
            <person name="Li L.L."/>
            <person name="Paustian M.L."/>
            <person name="Whittam T.S."/>
            <person name="Kapur V."/>
        </authorList>
    </citation>
    <scope>NUCLEOTIDE SEQUENCE [LARGE SCALE GENOMIC DNA]</scope>
    <source>
        <strain>Pm70</strain>
    </source>
</reference>
<evidence type="ECO:0000255" key="1">
    <source>
        <dbReference type="HAMAP-Rule" id="MF_00228"/>
    </source>
</evidence>
<comment type="function">
    <text evidence="1">Catalyzes the phosphorylation of the hydroxyl group of 4-methyl-5-beta-hydroxyethylthiazole (THZ).</text>
</comment>
<comment type="catalytic activity">
    <reaction evidence="1">
        <text>5-(2-hydroxyethyl)-4-methylthiazole + ATP = 4-methyl-5-(2-phosphooxyethyl)-thiazole + ADP + H(+)</text>
        <dbReference type="Rhea" id="RHEA:24212"/>
        <dbReference type="ChEBI" id="CHEBI:15378"/>
        <dbReference type="ChEBI" id="CHEBI:17957"/>
        <dbReference type="ChEBI" id="CHEBI:30616"/>
        <dbReference type="ChEBI" id="CHEBI:58296"/>
        <dbReference type="ChEBI" id="CHEBI:456216"/>
        <dbReference type="EC" id="2.7.1.50"/>
    </reaction>
</comment>
<comment type="cofactor">
    <cofactor evidence="1">
        <name>Mg(2+)</name>
        <dbReference type="ChEBI" id="CHEBI:18420"/>
    </cofactor>
</comment>
<comment type="pathway">
    <text evidence="1">Cofactor biosynthesis; thiamine diphosphate biosynthesis; 4-methyl-5-(2-phosphoethyl)-thiazole from 5-(2-hydroxyethyl)-4-methylthiazole: step 1/1.</text>
</comment>
<comment type="similarity">
    <text evidence="1">Belongs to the Thz kinase family.</text>
</comment>
<gene>
    <name evidence="1" type="primary">thiM</name>
    <name type="ordered locus">PM1262</name>
</gene>
<proteinExistence type="inferred from homology"/>
<organism>
    <name type="scientific">Pasteurella multocida (strain Pm70)</name>
    <dbReference type="NCBI Taxonomy" id="272843"/>
    <lineage>
        <taxon>Bacteria</taxon>
        <taxon>Pseudomonadati</taxon>
        <taxon>Pseudomonadota</taxon>
        <taxon>Gammaproteobacteria</taxon>
        <taxon>Pasteurellales</taxon>
        <taxon>Pasteurellaceae</taxon>
        <taxon>Pasteurella</taxon>
    </lineage>
</organism>
<keyword id="KW-0067">ATP-binding</keyword>
<keyword id="KW-0418">Kinase</keyword>
<keyword id="KW-0460">Magnesium</keyword>
<keyword id="KW-0479">Metal-binding</keyword>
<keyword id="KW-0547">Nucleotide-binding</keyword>
<keyword id="KW-1185">Reference proteome</keyword>
<keyword id="KW-0784">Thiamine biosynthesis</keyword>
<keyword id="KW-0808">Transferase</keyword>
<protein>
    <recommendedName>
        <fullName evidence="1">Hydroxyethylthiazole kinase</fullName>
        <ecNumber evidence="1">2.7.1.50</ecNumber>
    </recommendedName>
    <alternativeName>
        <fullName evidence="1">4-methyl-5-beta-hydroxyethylthiazole kinase</fullName>
        <shortName evidence="1">TH kinase</shortName>
        <shortName evidence="1">Thz kinase</shortName>
    </alternativeName>
</protein>